<reference key="1">
    <citation type="submission" date="2005-08" db="EMBL/GenBank/DDBJ databases">
        <authorList>
            <consortium name="NIH - Mammalian Gene Collection (MGC) project"/>
        </authorList>
    </citation>
    <scope>NUCLEOTIDE SEQUENCE [LARGE SCALE MRNA]</scope>
    <source>
        <strain>Crossbred X Angus</strain>
        <tissue>Liver</tissue>
    </source>
</reference>
<protein>
    <recommendedName>
        <fullName>Transcription elongation factor A protein-like 8</fullName>
        <shortName>TCEA-like protein 8</shortName>
    </recommendedName>
    <alternativeName>
        <fullName>Transcription elongation factor S-II protein-like 8</fullName>
    </alternativeName>
</protein>
<comment type="function">
    <text>May be involved in transcriptional regulation.</text>
</comment>
<comment type="subcellular location">
    <subcellularLocation>
        <location evidence="3">Nucleus</location>
    </subcellularLocation>
</comment>
<comment type="similarity">
    <text evidence="3">Belongs to the TFS-II family. TFA subfamily.</text>
</comment>
<sequence>MQKSCGENERKPQNMPKAEEDRPLEAVPQEAEGNPQPSEEGVSQEAEGNLRGGLTQPGQGYKEDSPVRHLDPEEMIRGADELERLREEIRRVRNKFVMMHWKQRHSRSRPYPVCFRP</sequence>
<dbReference type="EMBL" id="BC102605">
    <property type="protein sequence ID" value="AAI02606.1"/>
    <property type="molecule type" value="mRNA"/>
</dbReference>
<dbReference type="RefSeq" id="NP_001070584.1">
    <property type="nucleotide sequence ID" value="NM_001077116.2"/>
</dbReference>
<dbReference type="RefSeq" id="XP_010820014.1">
    <property type="nucleotide sequence ID" value="XM_010821712.4"/>
</dbReference>
<dbReference type="FunCoup" id="Q3T020">
    <property type="interactions" value="430"/>
</dbReference>
<dbReference type="STRING" id="9913.ENSBTAP00000045234"/>
<dbReference type="PaxDb" id="9913-ENSBTAP00000045234"/>
<dbReference type="Ensembl" id="ENSBTAT00000048145.3">
    <property type="protein sequence ID" value="ENSBTAP00000045234.1"/>
    <property type="gene ID" value="ENSBTAG00000027843.6"/>
</dbReference>
<dbReference type="Ensembl" id="ENSBTAT00000082119.2">
    <property type="protein sequence ID" value="ENSBTAP00000066856.1"/>
    <property type="gene ID" value="ENSBTAG00000027843.6"/>
</dbReference>
<dbReference type="Ensembl" id="ENSBTAT00000094236.1">
    <property type="protein sequence ID" value="ENSBTAP00000095135.1"/>
    <property type="gene ID" value="ENSBTAG00000064848.1"/>
</dbReference>
<dbReference type="Ensembl" id="ENSBTAT00000097644.1">
    <property type="protein sequence ID" value="ENSBTAP00000101659.1"/>
    <property type="gene ID" value="ENSBTAG00000027843.6"/>
</dbReference>
<dbReference type="Ensembl" id="ENSBTAT00000103315.1">
    <property type="protein sequence ID" value="ENSBTAP00000091057.1"/>
    <property type="gene ID" value="ENSBTAG00000064848.1"/>
</dbReference>
<dbReference type="Ensembl" id="ENSBTAT00000124234.1">
    <property type="protein sequence ID" value="ENSBTAP00000077251.1"/>
    <property type="gene ID" value="ENSBTAG00000027843.6"/>
</dbReference>
<dbReference type="Ensembl" id="ENSBTAT00000126032.1">
    <property type="protein sequence ID" value="ENSBTAP00000074770.1"/>
    <property type="gene ID" value="ENSBTAG00000027843.6"/>
</dbReference>
<dbReference type="Ensembl" id="ENSBTAT00000132900.1">
    <property type="protein sequence ID" value="ENSBTAP00000093422.1"/>
    <property type="gene ID" value="ENSBTAG00000064848.1"/>
</dbReference>
<dbReference type="GeneID" id="768059"/>
<dbReference type="KEGG" id="bta:768059"/>
<dbReference type="CTD" id="90843"/>
<dbReference type="VEuPathDB" id="HostDB:ENSBTAG00000027843"/>
<dbReference type="VEuPathDB" id="HostDB:ENSBTAG00000050869"/>
<dbReference type="VGNC" id="VGNC:35683">
    <property type="gene designation" value="TCEAL8"/>
</dbReference>
<dbReference type="eggNOG" id="ENOG502R12B">
    <property type="taxonomic scope" value="Eukaryota"/>
</dbReference>
<dbReference type="GeneTree" id="ENSGT00950000183164"/>
<dbReference type="HOGENOM" id="CLU_181913_0_0_1"/>
<dbReference type="InParanoid" id="Q3T020"/>
<dbReference type="OMA" id="QTSCEEN"/>
<dbReference type="OrthoDB" id="9825341at2759"/>
<dbReference type="TreeFam" id="TF336871"/>
<dbReference type="Proteomes" id="UP000009136">
    <property type="component" value="Chromosome X"/>
</dbReference>
<dbReference type="Bgee" id="ENSBTAG00000027843">
    <property type="expression patterns" value="Expressed in adenohypophysis and 106 other cell types or tissues"/>
</dbReference>
<dbReference type="GO" id="GO:0005634">
    <property type="term" value="C:nucleus"/>
    <property type="evidence" value="ECO:0007669"/>
    <property type="project" value="UniProtKB-SubCell"/>
</dbReference>
<dbReference type="InterPro" id="IPR021156">
    <property type="entry name" value="TF_A-like/BEX"/>
</dbReference>
<dbReference type="Pfam" id="PF04538">
    <property type="entry name" value="BEX"/>
    <property type="match status" value="1"/>
</dbReference>
<feature type="chain" id="PRO_0000239215" description="Transcription elongation factor A protein-like 8">
    <location>
        <begin position="1"/>
        <end position="117"/>
    </location>
</feature>
<feature type="region of interest" description="Disordered" evidence="2">
    <location>
        <begin position="1"/>
        <end position="74"/>
    </location>
</feature>
<feature type="coiled-coil region" evidence="1">
    <location>
        <begin position="73"/>
        <end position="100"/>
    </location>
</feature>
<feature type="compositionally biased region" description="Basic and acidic residues" evidence="2">
    <location>
        <begin position="1"/>
        <end position="24"/>
    </location>
</feature>
<feature type="compositionally biased region" description="Basic and acidic residues" evidence="2">
    <location>
        <begin position="61"/>
        <end position="74"/>
    </location>
</feature>
<keyword id="KW-0175">Coiled coil</keyword>
<keyword id="KW-0539">Nucleus</keyword>
<keyword id="KW-1185">Reference proteome</keyword>
<keyword id="KW-0804">Transcription</keyword>
<keyword id="KW-0805">Transcription regulation</keyword>
<organism>
    <name type="scientific">Bos taurus</name>
    <name type="common">Bovine</name>
    <dbReference type="NCBI Taxonomy" id="9913"/>
    <lineage>
        <taxon>Eukaryota</taxon>
        <taxon>Metazoa</taxon>
        <taxon>Chordata</taxon>
        <taxon>Craniata</taxon>
        <taxon>Vertebrata</taxon>
        <taxon>Euteleostomi</taxon>
        <taxon>Mammalia</taxon>
        <taxon>Eutheria</taxon>
        <taxon>Laurasiatheria</taxon>
        <taxon>Artiodactyla</taxon>
        <taxon>Ruminantia</taxon>
        <taxon>Pecora</taxon>
        <taxon>Bovidae</taxon>
        <taxon>Bovinae</taxon>
        <taxon>Bos</taxon>
    </lineage>
</organism>
<name>TCAL8_BOVIN</name>
<evidence type="ECO:0000255" key="1"/>
<evidence type="ECO:0000256" key="2">
    <source>
        <dbReference type="SAM" id="MobiDB-lite"/>
    </source>
</evidence>
<evidence type="ECO:0000305" key="3"/>
<proteinExistence type="inferred from homology"/>
<gene>
    <name type="primary">TCEAL8</name>
</gene>
<accession>Q3T020</accession>